<sequence>MELILYVCKKVNIMENISQPQLPMGVSFLNVAHTYVPNTKVECHYTIPFGMKSSTRDWIGIFKVNTSSIRDYETFVWAVPPENAGERSISHCSVQFQAYYLPHPGEQQYHFRYVDQCGSVRGCSEAFVFGEPQPMEEMVTLEDEDSCLDMLLIVPKATFLQNQLEMAQKERNDLMRARLALEEEVISKEKRICYLEAALDISEKTCFSLKEQCEDLVTREQIAIGERNLLNCQEAELRERILQLESEIQSMNKKMQENDRVLEGTVAIKFSLETEKGELKQRLGETTVEIERYQLQVDSLREKLRSSQDMLSSSQQKALLMGEELASMSSIRDCTISDLHKSRLETADLAIKVSDLSVKFKEGMGQWWQEKTALNHSMEAKRDQIVNLKAEKLSLDNSLQEERSQRHALQCKLNQETDARQVQLSENRRELSELKSALKVTQMEKEQLIEERQEIHQYVRRLEERLDKLADEKWKEDKMLMEDKTDSSPPTLSVDLSDSDDESPGDEGVSQQLGPCSLDEQDLSLNLPVFPCEPQKVVINQPAPIACQLQPLPEDNPDSW</sequence>
<protein>
    <recommendedName>
        <fullName>Calcium-binding and coiled-coil domain-containing protein 1-A</fullName>
    </recommendedName>
    <alternativeName>
        <fullName>Nuclear domain 10 protein NDP52</fullName>
    </alternativeName>
    <alternativeName>
        <fullName>Protein Xdsg</fullName>
    </alternativeName>
</protein>
<keyword id="KW-0025">Alternative splicing</keyword>
<keyword id="KW-0175">Coiled coil</keyword>
<keyword id="KW-0963">Cytoplasm</keyword>
<keyword id="KW-0539">Nucleus</keyword>
<keyword id="KW-1185">Reference proteome</keyword>
<proteinExistence type="evidence at protein level"/>
<evidence type="ECO:0000250" key="1">
    <source>
        <dbReference type="UniProtKB" id="Q8CGU1"/>
    </source>
</evidence>
<evidence type="ECO:0000255" key="2"/>
<evidence type="ECO:0000256" key="3">
    <source>
        <dbReference type="SAM" id="MobiDB-lite"/>
    </source>
</evidence>
<evidence type="ECO:0000269" key="4">
    <source>
    </source>
</evidence>
<evidence type="ECO:0000303" key="5">
    <source ref="2"/>
</evidence>
<evidence type="ECO:0000305" key="6"/>
<feature type="chain" id="PRO_0000308904" description="Calcium-binding and coiled-coil domain-containing protein 1-A">
    <location>
        <begin position="1"/>
        <end position="560"/>
    </location>
</feature>
<feature type="region of interest" description="Disordered" evidence="3">
    <location>
        <begin position="480"/>
        <end position="517"/>
    </location>
</feature>
<feature type="coiled-coil region" evidence="2">
    <location>
        <begin position="156"/>
        <end position="192"/>
    </location>
</feature>
<feature type="coiled-coil region" evidence="2">
    <location>
        <begin position="367"/>
        <end position="480"/>
    </location>
</feature>
<feature type="compositionally biased region" description="Low complexity" evidence="3">
    <location>
        <begin position="487"/>
        <end position="496"/>
    </location>
</feature>
<feature type="splice variant" id="VSP_029055" description="In isoform 2." evidence="5">
    <location>
        <begin position="1"/>
        <end position="13"/>
    </location>
</feature>
<feature type="sequence conflict" description="In Ref. 1; AAG33628." evidence="6" ref="1">
    <original>R</original>
    <variation>H</variation>
    <location>
        <position position="112"/>
    </location>
</feature>
<feature type="sequence conflict" description="In Ref. 1; AAG33628." evidence="6" ref="1">
    <original>A</original>
    <variation>S</variation>
    <location>
        <position position="126"/>
    </location>
</feature>
<feature type="sequence conflict" description="In Ref. 1; AAG33628." evidence="6" ref="1">
    <original>I</original>
    <variation>K</variation>
    <location>
        <position position="224"/>
    </location>
</feature>
<feature type="sequence conflict" description="In Ref. 2; AAH87514." evidence="6" ref="2">
    <original>N</original>
    <variation>D</variation>
    <location>
        <position position="258"/>
    </location>
</feature>
<feature type="sequence conflict" description="In Ref. 1; AAG33628." evidence="6" ref="1">
    <original>H</original>
    <variation>Q</variation>
    <location>
        <position position="407"/>
    </location>
</feature>
<feature type="sequence conflict" description="In Ref. 1; AAG33628." evidence="6" ref="1">
    <original>T</original>
    <variation>A</variation>
    <location>
        <position position="441"/>
    </location>
</feature>
<comment type="function">
    <text evidence="1">May function as a coactivator for aryl hydrocarbon and nuclear receptors.</text>
</comment>
<comment type="subcellular location">
    <subcellularLocation>
        <location evidence="4">Cytoplasm</location>
    </subcellularLocation>
    <subcellularLocation>
        <location evidence="4">Nucleus</location>
    </subcellularLocation>
    <text>Detected in the cytoplasm at stages I- II. Detected in the nucleus and the cytoplasm, except for the germ plasm, of almost all cells in cleaving embryos,.</text>
</comment>
<comment type="alternative products">
    <event type="alternative splicing"/>
    <isoform>
        <id>Q9DEX1-1</id>
        <name>1</name>
        <sequence type="displayed"/>
    </isoform>
    <isoform>
        <id>Q9DEX1-2</id>
        <name>2</name>
        <sequence type="described" ref="VSP_029055"/>
    </isoform>
</comment>
<comment type="developmental stage">
    <text evidence="4">Expressed in the germinal vesicle of oocytes at stages I-III. Expressed in ectodermal and mesodermal cells and their derivatives after stage 10. At stages later than 28, highly expressed in the myotome, spinal cord and notochord (at protein level).</text>
</comment>
<comment type="similarity">
    <text evidence="6">Belongs to the CALCOCO family.</text>
</comment>
<comment type="sequence caution" evidence="6">
    <conflict type="erroneous initiation">
        <sequence resource="EMBL-CDS" id="AAH87514"/>
    </conflict>
</comment>
<reference key="1">
    <citation type="journal article" date="2004" name="Dev. Genes Evol.">
        <title>A novel gene, the protein product of which is mainly expressed in germline cells and in the dorsal structures of Xenopus.</title>
        <authorList>
            <person name="Yamakita S."/>
            <person name="Mishima Y."/>
            <person name="Ikenishi K."/>
        </authorList>
    </citation>
    <scope>NUCLEOTIDE SEQUENCE [MRNA] (ISOFORM 1)</scope>
    <scope>SUBCELLULAR LOCATION</scope>
    <scope>DEVELOPMENTAL STAGE</scope>
</reference>
<reference key="2">
    <citation type="submission" date="2004-12" db="EMBL/GenBank/DDBJ databases">
        <authorList>
            <consortium name="NIH - Xenopus Gene Collection (XGC) project"/>
        </authorList>
    </citation>
    <scope>NUCLEOTIDE SEQUENCE [LARGE SCALE MRNA] (ISOFORM 2)</scope>
    <source>
        <tissue>Testis</tissue>
    </source>
</reference>
<accession>Q9DEX1</accession>
<accession>Q32N99</accession>
<accession>Q5PPT0</accession>
<name>CAO1A_XENLA</name>
<dbReference type="EMBL" id="AF312719">
    <property type="protein sequence ID" value="AAG33628.1"/>
    <property type="molecule type" value="mRNA"/>
</dbReference>
<dbReference type="EMBL" id="BC087514">
    <property type="protein sequence ID" value="AAH87514.1"/>
    <property type="status" value="ALT_INIT"/>
    <property type="molecule type" value="mRNA"/>
</dbReference>
<dbReference type="EMBL" id="BC108760">
    <property type="protein sequence ID" value="AAI08761.1"/>
    <property type="molecule type" value="mRNA"/>
</dbReference>
<dbReference type="RefSeq" id="NP_001082045.1">
    <property type="nucleotide sequence ID" value="NM_001088576.2"/>
</dbReference>
<dbReference type="SMR" id="Q9DEX1"/>
<dbReference type="DNASU" id="398195"/>
<dbReference type="GeneID" id="398195"/>
<dbReference type="KEGG" id="xla:398195"/>
<dbReference type="AGR" id="Xenbase:XB-GENE-6251912"/>
<dbReference type="CTD" id="398195"/>
<dbReference type="Xenbase" id="XB-GENE-6251912">
    <property type="gene designation" value="calcoco1.S"/>
</dbReference>
<dbReference type="OrthoDB" id="10015001at2759"/>
<dbReference type="Proteomes" id="UP000186698">
    <property type="component" value="Chromosome 2S"/>
</dbReference>
<dbReference type="Bgee" id="398195">
    <property type="expression patterns" value="Expressed in heart and 18 other cell types or tissues"/>
</dbReference>
<dbReference type="GO" id="GO:0005737">
    <property type="term" value="C:cytoplasm"/>
    <property type="evidence" value="ECO:0007669"/>
    <property type="project" value="UniProtKB-SubCell"/>
</dbReference>
<dbReference type="GO" id="GO:0005634">
    <property type="term" value="C:nucleus"/>
    <property type="evidence" value="ECO:0007669"/>
    <property type="project" value="UniProtKB-SubCell"/>
</dbReference>
<dbReference type="GO" id="GO:0003713">
    <property type="term" value="F:transcription coactivator activity"/>
    <property type="evidence" value="ECO:0000318"/>
    <property type="project" value="GO_Central"/>
</dbReference>
<dbReference type="GO" id="GO:0045944">
    <property type="term" value="P:positive regulation of transcription by RNA polymerase II"/>
    <property type="evidence" value="ECO:0000318"/>
    <property type="project" value="GO_Central"/>
</dbReference>
<dbReference type="Gene3D" id="2.60.40.2840">
    <property type="match status" value="1"/>
</dbReference>
<dbReference type="InterPro" id="IPR012852">
    <property type="entry name" value="CALCOCO1-like"/>
</dbReference>
<dbReference type="InterPro" id="IPR041611">
    <property type="entry name" value="SKICH"/>
</dbReference>
<dbReference type="InterPro" id="IPR051002">
    <property type="entry name" value="UBA_autophagy_assoc_protein"/>
</dbReference>
<dbReference type="PANTHER" id="PTHR31915:SF5">
    <property type="entry name" value="CALCIUM-BINDING AND COILED-COIL DOMAIN-CONTAINING PROTEIN 1"/>
    <property type="match status" value="1"/>
</dbReference>
<dbReference type="PANTHER" id="PTHR31915">
    <property type="entry name" value="SKICH DOMAIN-CONTAINING PROTEIN"/>
    <property type="match status" value="1"/>
</dbReference>
<dbReference type="Pfam" id="PF07888">
    <property type="entry name" value="CALCOCO1"/>
    <property type="match status" value="2"/>
</dbReference>
<dbReference type="Pfam" id="PF17751">
    <property type="entry name" value="SKICH"/>
    <property type="match status" value="1"/>
</dbReference>
<dbReference type="SUPFAM" id="SSF57997">
    <property type="entry name" value="Tropomyosin"/>
    <property type="match status" value="1"/>
</dbReference>
<organism>
    <name type="scientific">Xenopus laevis</name>
    <name type="common">African clawed frog</name>
    <dbReference type="NCBI Taxonomy" id="8355"/>
    <lineage>
        <taxon>Eukaryota</taxon>
        <taxon>Metazoa</taxon>
        <taxon>Chordata</taxon>
        <taxon>Craniata</taxon>
        <taxon>Vertebrata</taxon>
        <taxon>Euteleostomi</taxon>
        <taxon>Amphibia</taxon>
        <taxon>Batrachia</taxon>
        <taxon>Anura</taxon>
        <taxon>Pipoidea</taxon>
        <taxon>Pipidae</taxon>
        <taxon>Xenopodinae</taxon>
        <taxon>Xenopus</taxon>
        <taxon>Xenopus</taxon>
    </lineage>
</organism>
<gene>
    <name type="primary">calcoco1-a</name>
</gene>